<name>RR19_LOLPR</name>
<keyword id="KW-0150">Chloroplast</keyword>
<keyword id="KW-0934">Plastid</keyword>
<keyword id="KW-0687">Ribonucleoprotein</keyword>
<keyword id="KW-0689">Ribosomal protein</keyword>
<keyword id="KW-0694">RNA-binding</keyword>
<keyword id="KW-0699">rRNA-binding</keyword>
<comment type="function">
    <text evidence="1">Protein S19 forms a complex with S13 that binds strongly to the 16S ribosomal RNA.</text>
</comment>
<comment type="subcellular location">
    <subcellularLocation>
        <location>Plastid</location>
        <location>Chloroplast</location>
    </subcellularLocation>
</comment>
<comment type="similarity">
    <text evidence="1">Belongs to the universal ribosomal protein uS19 family.</text>
</comment>
<proteinExistence type="inferred from homology"/>
<evidence type="ECO:0000255" key="1">
    <source>
        <dbReference type="HAMAP-Rule" id="MF_00531"/>
    </source>
</evidence>
<evidence type="ECO:0000305" key="2"/>
<reference key="1">
    <citation type="journal article" date="2008" name="PLoS ONE">
        <title>An optimized chloroplast DNA extraction protocol for grasses (Poaceae) proves suitable for whole plastid genome sequencing and SNP detection.</title>
        <authorList>
            <person name="Diekmann K."/>
            <person name="Hodkinson T.R."/>
            <person name="Fricke E."/>
            <person name="Barth S."/>
        </authorList>
    </citation>
    <scope>NUCLEOTIDE SEQUENCE [LARGE SCALE GENOMIC DNA]</scope>
    <source>
        <strain>cv. Cashel</strain>
    </source>
</reference>
<geneLocation type="chloroplast"/>
<sequence>MTRKKMNPFVAHHLLAKIEKVNMKEEKETIVTWSRASSILPTMVGHTIAIHNGKEHIPIYITNPMVGRKLGEFVPTRHFTSYENARKDTKSRR</sequence>
<accession>A8Y9C7</accession>
<gene>
    <name evidence="1" type="primary">rps19-1</name>
    <name type="ordered locus">LopeCp082</name>
</gene>
<gene>
    <name evidence="1" type="primary">rps19-2</name>
    <name type="ordered locus">LopeCp131</name>
</gene>
<feature type="chain" id="PRO_0000354362" description="Small ribosomal subunit protein uS19c">
    <location>
        <begin position="1"/>
        <end position="93"/>
    </location>
</feature>
<organism>
    <name type="scientific">Lolium perenne</name>
    <name type="common">Perennial ryegrass</name>
    <dbReference type="NCBI Taxonomy" id="4522"/>
    <lineage>
        <taxon>Eukaryota</taxon>
        <taxon>Viridiplantae</taxon>
        <taxon>Streptophyta</taxon>
        <taxon>Embryophyta</taxon>
        <taxon>Tracheophyta</taxon>
        <taxon>Spermatophyta</taxon>
        <taxon>Magnoliopsida</taxon>
        <taxon>Liliopsida</taxon>
        <taxon>Poales</taxon>
        <taxon>Poaceae</taxon>
        <taxon>BOP clade</taxon>
        <taxon>Pooideae</taxon>
        <taxon>Poodae</taxon>
        <taxon>Poeae</taxon>
        <taxon>Poeae Chloroplast Group 2 (Poeae type)</taxon>
        <taxon>Loliodinae</taxon>
        <taxon>Loliinae</taxon>
        <taxon>Lolium</taxon>
    </lineage>
</organism>
<protein>
    <recommendedName>
        <fullName evidence="1">Small ribosomal subunit protein uS19c</fullName>
    </recommendedName>
    <alternativeName>
        <fullName evidence="2">30S ribosomal protein S19, chloroplastic</fullName>
    </alternativeName>
</protein>
<dbReference type="EMBL" id="AM777385">
    <property type="protein sequence ID" value="CAO86016.1"/>
    <property type="molecule type" value="Genomic_DNA"/>
</dbReference>
<dbReference type="EMBL" id="AM777385">
    <property type="protein sequence ID" value="CAO86038.1"/>
    <property type="molecule type" value="Genomic_DNA"/>
</dbReference>
<dbReference type="SMR" id="A8Y9C7"/>
<dbReference type="KEGG" id="lper:5696531"/>
<dbReference type="KEGG" id="lper:5696650"/>
<dbReference type="GO" id="GO:0009507">
    <property type="term" value="C:chloroplast"/>
    <property type="evidence" value="ECO:0007669"/>
    <property type="project" value="UniProtKB-SubCell"/>
</dbReference>
<dbReference type="GO" id="GO:0005763">
    <property type="term" value="C:mitochondrial small ribosomal subunit"/>
    <property type="evidence" value="ECO:0007669"/>
    <property type="project" value="TreeGrafter"/>
</dbReference>
<dbReference type="GO" id="GO:0019843">
    <property type="term" value="F:rRNA binding"/>
    <property type="evidence" value="ECO:0007669"/>
    <property type="project" value="UniProtKB-UniRule"/>
</dbReference>
<dbReference type="GO" id="GO:0003735">
    <property type="term" value="F:structural constituent of ribosome"/>
    <property type="evidence" value="ECO:0007669"/>
    <property type="project" value="InterPro"/>
</dbReference>
<dbReference type="GO" id="GO:0000028">
    <property type="term" value="P:ribosomal small subunit assembly"/>
    <property type="evidence" value="ECO:0007669"/>
    <property type="project" value="TreeGrafter"/>
</dbReference>
<dbReference type="GO" id="GO:0006412">
    <property type="term" value="P:translation"/>
    <property type="evidence" value="ECO:0007669"/>
    <property type="project" value="UniProtKB-UniRule"/>
</dbReference>
<dbReference type="FunFam" id="3.30.860.10:FF:000001">
    <property type="entry name" value="30S ribosomal protein S19"/>
    <property type="match status" value="1"/>
</dbReference>
<dbReference type="Gene3D" id="3.30.860.10">
    <property type="entry name" value="30s Ribosomal Protein S19, Chain A"/>
    <property type="match status" value="1"/>
</dbReference>
<dbReference type="HAMAP" id="MF_00531">
    <property type="entry name" value="Ribosomal_uS19"/>
    <property type="match status" value="1"/>
</dbReference>
<dbReference type="InterPro" id="IPR002222">
    <property type="entry name" value="Ribosomal_uS19"/>
</dbReference>
<dbReference type="InterPro" id="IPR005732">
    <property type="entry name" value="Ribosomal_uS19_bac-type"/>
</dbReference>
<dbReference type="InterPro" id="IPR020934">
    <property type="entry name" value="Ribosomal_uS19_CS"/>
</dbReference>
<dbReference type="InterPro" id="IPR023575">
    <property type="entry name" value="Ribosomal_uS19_SF"/>
</dbReference>
<dbReference type="NCBIfam" id="TIGR01050">
    <property type="entry name" value="rpsS_bact"/>
    <property type="match status" value="1"/>
</dbReference>
<dbReference type="PANTHER" id="PTHR11880">
    <property type="entry name" value="RIBOSOMAL PROTEIN S19P FAMILY MEMBER"/>
    <property type="match status" value="1"/>
</dbReference>
<dbReference type="PANTHER" id="PTHR11880:SF8">
    <property type="entry name" value="SMALL RIBOSOMAL SUBUNIT PROTEIN US19M"/>
    <property type="match status" value="1"/>
</dbReference>
<dbReference type="Pfam" id="PF00203">
    <property type="entry name" value="Ribosomal_S19"/>
    <property type="match status" value="1"/>
</dbReference>
<dbReference type="PIRSF" id="PIRSF002144">
    <property type="entry name" value="Ribosomal_S19"/>
    <property type="match status" value="1"/>
</dbReference>
<dbReference type="PRINTS" id="PR00975">
    <property type="entry name" value="RIBOSOMALS19"/>
</dbReference>
<dbReference type="SUPFAM" id="SSF54570">
    <property type="entry name" value="Ribosomal protein S19"/>
    <property type="match status" value="1"/>
</dbReference>
<dbReference type="PROSITE" id="PS00323">
    <property type="entry name" value="RIBOSOMAL_S19"/>
    <property type="match status" value="1"/>
</dbReference>